<reference key="1">
    <citation type="journal article" date="2009" name="PLoS Genet.">
        <title>Organised genome dynamics in the Escherichia coli species results in highly diverse adaptive paths.</title>
        <authorList>
            <person name="Touchon M."/>
            <person name="Hoede C."/>
            <person name="Tenaillon O."/>
            <person name="Barbe V."/>
            <person name="Baeriswyl S."/>
            <person name="Bidet P."/>
            <person name="Bingen E."/>
            <person name="Bonacorsi S."/>
            <person name="Bouchier C."/>
            <person name="Bouvet O."/>
            <person name="Calteau A."/>
            <person name="Chiapello H."/>
            <person name="Clermont O."/>
            <person name="Cruveiller S."/>
            <person name="Danchin A."/>
            <person name="Diard M."/>
            <person name="Dossat C."/>
            <person name="Karoui M.E."/>
            <person name="Frapy E."/>
            <person name="Garry L."/>
            <person name="Ghigo J.M."/>
            <person name="Gilles A.M."/>
            <person name="Johnson J."/>
            <person name="Le Bouguenec C."/>
            <person name="Lescat M."/>
            <person name="Mangenot S."/>
            <person name="Martinez-Jehanne V."/>
            <person name="Matic I."/>
            <person name="Nassif X."/>
            <person name="Oztas S."/>
            <person name="Petit M.A."/>
            <person name="Pichon C."/>
            <person name="Rouy Z."/>
            <person name="Ruf C.S."/>
            <person name="Schneider D."/>
            <person name="Tourret J."/>
            <person name="Vacherie B."/>
            <person name="Vallenet D."/>
            <person name="Medigue C."/>
            <person name="Rocha E.P.C."/>
            <person name="Denamur E."/>
        </authorList>
    </citation>
    <scope>NUCLEOTIDE SEQUENCE [LARGE SCALE GENOMIC DNA]</scope>
    <source>
        <strain>S88 / ExPEC</strain>
    </source>
</reference>
<sequence length="486" mass="54822">MTTVYTLVSWLAILGYWLLIAGVTLRILMKRRAVPSAMAWLLIIYILPLVGIIAYLAVGELHLGKRRAERARAMWPSTAKWLNDLKACKHIFAEENSSVAAPLFKLCERRQGIAGVKGNQLQLMTESDDVMQALIRDIQLARHNIEMVFYIWQPGGMADQVAESLMAAARRGIHCRLMLDSAGSVAFFRSPWPELMRNAGIEVVEALKVNLMRVFLRRMDLRQHRKMIMIDNYIAYTGSMNMVDPRYFKQDAGVGQWIDLMARMEGPIATAMGIIYSCDWEIETGKRILPPPPDVNIMPFEQASGHTIHTIASGPGFPEDLIHQALLTAAYSAREYLIMTTPYFVPSDDLLHAICTAAQRGVDVSIILPRKNDSMLVGWASRAFFTELLAAGVKIYQFEGGLLHTKSVLVDGELSLVGTVNLDMRSLWLNFEITLAIDDKGFGADLAAVQDDYISRSRLLDARLWLKRPLWQRVAERLFYFFSPLL</sequence>
<name>CLSA_ECO45</name>
<organism>
    <name type="scientific">Escherichia coli O45:K1 (strain S88 / ExPEC)</name>
    <dbReference type="NCBI Taxonomy" id="585035"/>
    <lineage>
        <taxon>Bacteria</taxon>
        <taxon>Pseudomonadati</taxon>
        <taxon>Pseudomonadota</taxon>
        <taxon>Gammaproteobacteria</taxon>
        <taxon>Enterobacterales</taxon>
        <taxon>Enterobacteriaceae</taxon>
        <taxon>Escherichia</taxon>
    </lineage>
</organism>
<proteinExistence type="inferred from homology"/>
<feature type="chain" id="PRO_1000118586" description="Cardiolipin synthase A">
    <location>
        <begin position="1"/>
        <end position="486"/>
    </location>
</feature>
<feature type="transmembrane region" description="Helical" evidence="1">
    <location>
        <begin position="3"/>
        <end position="23"/>
    </location>
</feature>
<feature type="transmembrane region" description="Helical" evidence="1">
    <location>
        <begin position="38"/>
        <end position="58"/>
    </location>
</feature>
<feature type="domain" description="PLD phosphodiesterase 1" evidence="1">
    <location>
        <begin position="219"/>
        <end position="246"/>
    </location>
</feature>
<feature type="domain" description="PLD phosphodiesterase 2" evidence="1">
    <location>
        <begin position="399"/>
        <end position="426"/>
    </location>
</feature>
<feature type="active site" evidence="1">
    <location>
        <position position="224"/>
    </location>
</feature>
<feature type="active site" evidence="1">
    <location>
        <position position="226"/>
    </location>
</feature>
<feature type="active site" evidence="1">
    <location>
        <position position="231"/>
    </location>
</feature>
<feature type="active site" evidence="1">
    <location>
        <position position="404"/>
    </location>
</feature>
<feature type="active site" evidence="1">
    <location>
        <position position="406"/>
    </location>
</feature>
<feature type="active site" evidence="1">
    <location>
        <position position="411"/>
    </location>
</feature>
<accession>B7ML01</accession>
<evidence type="ECO:0000255" key="1">
    <source>
        <dbReference type="HAMAP-Rule" id="MF_00190"/>
    </source>
</evidence>
<dbReference type="EC" id="2.7.8.-" evidence="1"/>
<dbReference type="EMBL" id="CU928161">
    <property type="protein sequence ID" value="CAR02642.1"/>
    <property type="molecule type" value="Genomic_DNA"/>
</dbReference>
<dbReference type="RefSeq" id="WP_000214516.1">
    <property type="nucleotide sequence ID" value="NC_011742.1"/>
</dbReference>
<dbReference type="SMR" id="B7ML01"/>
<dbReference type="GeneID" id="93775314"/>
<dbReference type="KEGG" id="ecz:ECS88_1317"/>
<dbReference type="HOGENOM" id="CLU_038053_1_0_6"/>
<dbReference type="Proteomes" id="UP000000747">
    <property type="component" value="Chromosome"/>
</dbReference>
<dbReference type="GO" id="GO:0005886">
    <property type="term" value="C:plasma membrane"/>
    <property type="evidence" value="ECO:0007669"/>
    <property type="project" value="UniProtKB-SubCell"/>
</dbReference>
<dbReference type="GO" id="GO:0008808">
    <property type="term" value="F:cardiolipin synthase activity"/>
    <property type="evidence" value="ECO:0007669"/>
    <property type="project" value="InterPro"/>
</dbReference>
<dbReference type="GO" id="GO:0032049">
    <property type="term" value="P:cardiolipin biosynthetic process"/>
    <property type="evidence" value="ECO:0007669"/>
    <property type="project" value="InterPro"/>
</dbReference>
<dbReference type="CDD" id="cd09152">
    <property type="entry name" value="PLDc_EcCLS_like_1"/>
    <property type="match status" value="1"/>
</dbReference>
<dbReference type="CDD" id="cd09158">
    <property type="entry name" value="PLDc_EcCLS_like_2"/>
    <property type="match status" value="1"/>
</dbReference>
<dbReference type="FunFam" id="3.30.870.10:FF:000002">
    <property type="entry name" value="Cardiolipin synthase A"/>
    <property type="match status" value="1"/>
</dbReference>
<dbReference type="FunFam" id="3.30.870.10:FF:000003">
    <property type="entry name" value="Cardiolipin synthase A"/>
    <property type="match status" value="1"/>
</dbReference>
<dbReference type="Gene3D" id="3.30.870.10">
    <property type="entry name" value="Endonuclease Chain A"/>
    <property type="match status" value="2"/>
</dbReference>
<dbReference type="HAMAP" id="MF_00190">
    <property type="entry name" value="Cardiolipin_synth_ClsA"/>
    <property type="match status" value="1"/>
</dbReference>
<dbReference type="InterPro" id="IPR022924">
    <property type="entry name" value="Cardiolipin_synthase"/>
</dbReference>
<dbReference type="InterPro" id="IPR030840">
    <property type="entry name" value="CL_synthase_A"/>
</dbReference>
<dbReference type="InterPro" id="IPR027379">
    <property type="entry name" value="CLS_N"/>
</dbReference>
<dbReference type="InterPro" id="IPR025202">
    <property type="entry name" value="PLD-like_dom"/>
</dbReference>
<dbReference type="InterPro" id="IPR001736">
    <property type="entry name" value="PLipase_D/transphosphatidylase"/>
</dbReference>
<dbReference type="NCBIfam" id="TIGR04265">
    <property type="entry name" value="bac_cardiolipin"/>
    <property type="match status" value="1"/>
</dbReference>
<dbReference type="PANTHER" id="PTHR21248">
    <property type="entry name" value="CARDIOLIPIN SYNTHASE"/>
    <property type="match status" value="1"/>
</dbReference>
<dbReference type="PANTHER" id="PTHR21248:SF22">
    <property type="entry name" value="PHOSPHOLIPASE D"/>
    <property type="match status" value="1"/>
</dbReference>
<dbReference type="Pfam" id="PF13091">
    <property type="entry name" value="PLDc_2"/>
    <property type="match status" value="2"/>
</dbReference>
<dbReference type="Pfam" id="PF13396">
    <property type="entry name" value="PLDc_N"/>
    <property type="match status" value="1"/>
</dbReference>
<dbReference type="SMART" id="SM00155">
    <property type="entry name" value="PLDc"/>
    <property type="match status" value="2"/>
</dbReference>
<dbReference type="SUPFAM" id="SSF56024">
    <property type="entry name" value="Phospholipase D/nuclease"/>
    <property type="match status" value="2"/>
</dbReference>
<dbReference type="PROSITE" id="PS50035">
    <property type="entry name" value="PLD"/>
    <property type="match status" value="2"/>
</dbReference>
<protein>
    <recommendedName>
        <fullName evidence="1">Cardiolipin synthase A</fullName>
        <shortName evidence="1">CL synthase</shortName>
        <ecNumber evidence="1">2.7.8.-</ecNumber>
    </recommendedName>
</protein>
<comment type="function">
    <text evidence="1">Catalyzes the reversible phosphatidyl group transfer from one phosphatidylglycerol molecule to another to form cardiolipin (CL) (diphosphatidylglycerol) and glycerol.</text>
</comment>
<comment type="catalytic activity">
    <reaction evidence="1">
        <text>2 a 1,2-diacyl-sn-glycero-3-phospho-(1'-sn-glycerol) = a cardiolipin + glycerol</text>
        <dbReference type="Rhea" id="RHEA:31451"/>
        <dbReference type="ChEBI" id="CHEBI:17754"/>
        <dbReference type="ChEBI" id="CHEBI:62237"/>
        <dbReference type="ChEBI" id="CHEBI:64716"/>
    </reaction>
</comment>
<comment type="subcellular location">
    <subcellularLocation>
        <location evidence="1">Cell inner membrane</location>
        <topology evidence="1">Multi-pass membrane protein</topology>
    </subcellularLocation>
</comment>
<comment type="similarity">
    <text evidence="1">Belongs to the phospholipase D family. Cardiolipin synthase subfamily. ClsA sub-subfamily.</text>
</comment>
<keyword id="KW-0997">Cell inner membrane</keyword>
<keyword id="KW-1003">Cell membrane</keyword>
<keyword id="KW-0444">Lipid biosynthesis</keyword>
<keyword id="KW-0443">Lipid metabolism</keyword>
<keyword id="KW-0472">Membrane</keyword>
<keyword id="KW-0594">Phospholipid biosynthesis</keyword>
<keyword id="KW-1208">Phospholipid metabolism</keyword>
<keyword id="KW-1185">Reference proteome</keyword>
<keyword id="KW-0677">Repeat</keyword>
<keyword id="KW-0808">Transferase</keyword>
<keyword id="KW-0812">Transmembrane</keyword>
<keyword id="KW-1133">Transmembrane helix</keyword>
<gene>
    <name evidence="1" type="primary">clsA</name>
    <name type="synonym">cls</name>
    <name type="ordered locus">ECS88_1317</name>
</gene>